<name>PUR5_ECOBW</name>
<keyword id="KW-0067">ATP-binding</keyword>
<keyword id="KW-0963">Cytoplasm</keyword>
<keyword id="KW-0436">Ligase</keyword>
<keyword id="KW-0547">Nucleotide-binding</keyword>
<keyword id="KW-0658">Purine biosynthesis</keyword>
<comment type="catalytic activity">
    <reaction evidence="1">
        <text>2-formamido-N(1)-(5-O-phospho-beta-D-ribosyl)acetamidine + ATP = 5-amino-1-(5-phospho-beta-D-ribosyl)imidazole + ADP + phosphate + H(+)</text>
        <dbReference type="Rhea" id="RHEA:23032"/>
        <dbReference type="ChEBI" id="CHEBI:15378"/>
        <dbReference type="ChEBI" id="CHEBI:30616"/>
        <dbReference type="ChEBI" id="CHEBI:43474"/>
        <dbReference type="ChEBI" id="CHEBI:137981"/>
        <dbReference type="ChEBI" id="CHEBI:147287"/>
        <dbReference type="ChEBI" id="CHEBI:456216"/>
        <dbReference type="EC" id="6.3.3.1"/>
    </reaction>
</comment>
<comment type="pathway">
    <text evidence="1">Purine metabolism; IMP biosynthesis via de novo pathway; 5-amino-1-(5-phospho-D-ribosyl)imidazole from N(2)-formyl-N(1)-(5-phospho-D-ribosyl)glycinamide: step 2/2.</text>
</comment>
<comment type="subcellular location">
    <subcellularLocation>
        <location evidence="1">Cytoplasm</location>
    </subcellularLocation>
</comment>
<comment type="similarity">
    <text evidence="1">Belongs to the AIR synthase family.</text>
</comment>
<proteinExistence type="inferred from homology"/>
<reference key="1">
    <citation type="journal article" date="2009" name="J. Bacteriol.">
        <title>Genomic sequencing reveals regulatory mutations and recombinational events in the widely used MC4100 lineage of Escherichia coli K-12.</title>
        <authorList>
            <person name="Ferenci T."/>
            <person name="Zhou Z."/>
            <person name="Betteridge T."/>
            <person name="Ren Y."/>
            <person name="Liu Y."/>
            <person name="Feng L."/>
            <person name="Reeves P.R."/>
            <person name="Wang L."/>
        </authorList>
    </citation>
    <scope>NUCLEOTIDE SEQUENCE [LARGE SCALE GENOMIC DNA]</scope>
    <source>
        <strain>K12 / MC4100 / BW2952</strain>
    </source>
</reference>
<sequence length="345" mass="36854">MTDKTSLSYKDAGVDIDAGNALVGRIKGVVKKTRRPEVMGGLGGFGALCALPQKYREPVLVSGTDGVGTKLRLAMDLKRHDTIGIDLVAMCVNDLVVQGAEPLFFLDYYATGKLDVDTASAVISGIAEGCLQSGCSLVGGETAEMPGMYHGEDYDVAGFCVGVVEKSEIIDGSKVSDGDVLIALGSSGPHSNGYSLVRKILEVSGCDPQTTELDGKPLADHLLAPTRIYVKSVLELIEKVDVHAIAHLTGGGFWENIPRVLPDNTQAVIDESSWQWPEVFNWLQTAGNVEHHEMYRTFNCGVGMIIALPAPEVDKALALLNANGENAWKIGIIKASDSEQRVVIE</sequence>
<gene>
    <name evidence="1" type="primary">purM</name>
    <name type="ordered locus">BWG_2263</name>
</gene>
<evidence type="ECO:0000255" key="1">
    <source>
        <dbReference type="HAMAP-Rule" id="MF_00741"/>
    </source>
</evidence>
<feature type="chain" id="PRO_1000212818" description="Phosphoribosylformylglycinamidine cyclo-ligase">
    <location>
        <begin position="1"/>
        <end position="345"/>
    </location>
</feature>
<accession>C4ZX74</accession>
<organism>
    <name type="scientific">Escherichia coli (strain K12 / MC4100 / BW2952)</name>
    <dbReference type="NCBI Taxonomy" id="595496"/>
    <lineage>
        <taxon>Bacteria</taxon>
        <taxon>Pseudomonadati</taxon>
        <taxon>Pseudomonadota</taxon>
        <taxon>Gammaproteobacteria</taxon>
        <taxon>Enterobacterales</taxon>
        <taxon>Enterobacteriaceae</taxon>
        <taxon>Escherichia</taxon>
    </lineage>
</organism>
<dbReference type="EC" id="6.3.3.1" evidence="1"/>
<dbReference type="EMBL" id="CP001396">
    <property type="protein sequence ID" value="ACR64056.1"/>
    <property type="molecule type" value="Genomic_DNA"/>
</dbReference>
<dbReference type="RefSeq" id="WP_001336050.1">
    <property type="nucleotide sequence ID" value="NC_012759.1"/>
</dbReference>
<dbReference type="SMR" id="C4ZX74"/>
<dbReference type="KEGG" id="ebw:BWG_2263"/>
<dbReference type="HOGENOM" id="CLU_047116_0_0_6"/>
<dbReference type="UniPathway" id="UPA00074">
    <property type="reaction ID" value="UER00129"/>
</dbReference>
<dbReference type="GO" id="GO:0005829">
    <property type="term" value="C:cytosol"/>
    <property type="evidence" value="ECO:0007669"/>
    <property type="project" value="TreeGrafter"/>
</dbReference>
<dbReference type="GO" id="GO:0005524">
    <property type="term" value="F:ATP binding"/>
    <property type="evidence" value="ECO:0007669"/>
    <property type="project" value="UniProtKB-KW"/>
</dbReference>
<dbReference type="GO" id="GO:0004637">
    <property type="term" value="F:phosphoribosylamine-glycine ligase activity"/>
    <property type="evidence" value="ECO:0007669"/>
    <property type="project" value="TreeGrafter"/>
</dbReference>
<dbReference type="GO" id="GO:0004641">
    <property type="term" value="F:phosphoribosylformylglycinamidine cyclo-ligase activity"/>
    <property type="evidence" value="ECO:0007669"/>
    <property type="project" value="UniProtKB-UniRule"/>
</dbReference>
<dbReference type="GO" id="GO:0006189">
    <property type="term" value="P:'de novo' IMP biosynthetic process"/>
    <property type="evidence" value="ECO:0007669"/>
    <property type="project" value="UniProtKB-UniRule"/>
</dbReference>
<dbReference type="GO" id="GO:0046084">
    <property type="term" value="P:adenine biosynthetic process"/>
    <property type="evidence" value="ECO:0007669"/>
    <property type="project" value="TreeGrafter"/>
</dbReference>
<dbReference type="CDD" id="cd02196">
    <property type="entry name" value="PurM"/>
    <property type="match status" value="1"/>
</dbReference>
<dbReference type="FunFam" id="3.30.1330.10:FF:000001">
    <property type="entry name" value="Phosphoribosylformylglycinamidine cyclo-ligase"/>
    <property type="match status" value="1"/>
</dbReference>
<dbReference type="FunFam" id="3.90.650.10:FF:000001">
    <property type="entry name" value="Phosphoribosylformylglycinamidine cyclo-ligase"/>
    <property type="match status" value="1"/>
</dbReference>
<dbReference type="Gene3D" id="3.90.650.10">
    <property type="entry name" value="PurM-like C-terminal domain"/>
    <property type="match status" value="1"/>
</dbReference>
<dbReference type="Gene3D" id="3.30.1330.10">
    <property type="entry name" value="PurM-like, N-terminal domain"/>
    <property type="match status" value="1"/>
</dbReference>
<dbReference type="HAMAP" id="MF_00741">
    <property type="entry name" value="AIRS"/>
    <property type="match status" value="1"/>
</dbReference>
<dbReference type="InterPro" id="IPR010918">
    <property type="entry name" value="PurM-like_C_dom"/>
</dbReference>
<dbReference type="InterPro" id="IPR036676">
    <property type="entry name" value="PurM-like_C_sf"/>
</dbReference>
<dbReference type="InterPro" id="IPR016188">
    <property type="entry name" value="PurM-like_N"/>
</dbReference>
<dbReference type="InterPro" id="IPR036921">
    <property type="entry name" value="PurM-like_N_sf"/>
</dbReference>
<dbReference type="InterPro" id="IPR004733">
    <property type="entry name" value="PurM_cligase"/>
</dbReference>
<dbReference type="NCBIfam" id="TIGR00878">
    <property type="entry name" value="purM"/>
    <property type="match status" value="1"/>
</dbReference>
<dbReference type="PANTHER" id="PTHR10520:SF12">
    <property type="entry name" value="TRIFUNCTIONAL PURINE BIOSYNTHETIC PROTEIN ADENOSINE-3"/>
    <property type="match status" value="1"/>
</dbReference>
<dbReference type="PANTHER" id="PTHR10520">
    <property type="entry name" value="TRIFUNCTIONAL PURINE BIOSYNTHETIC PROTEIN ADENOSINE-3-RELATED"/>
    <property type="match status" value="1"/>
</dbReference>
<dbReference type="Pfam" id="PF00586">
    <property type="entry name" value="AIRS"/>
    <property type="match status" value="1"/>
</dbReference>
<dbReference type="Pfam" id="PF02769">
    <property type="entry name" value="AIRS_C"/>
    <property type="match status" value="1"/>
</dbReference>
<dbReference type="SUPFAM" id="SSF56042">
    <property type="entry name" value="PurM C-terminal domain-like"/>
    <property type="match status" value="1"/>
</dbReference>
<dbReference type="SUPFAM" id="SSF55326">
    <property type="entry name" value="PurM N-terminal domain-like"/>
    <property type="match status" value="1"/>
</dbReference>
<protein>
    <recommendedName>
        <fullName evidence="1">Phosphoribosylformylglycinamidine cyclo-ligase</fullName>
        <ecNumber evidence="1">6.3.3.1</ecNumber>
    </recommendedName>
    <alternativeName>
        <fullName evidence="1">AIR synthase</fullName>
    </alternativeName>
    <alternativeName>
        <fullName evidence="1">AIRS</fullName>
    </alternativeName>
    <alternativeName>
        <fullName evidence="1">Phosphoribosyl-aminoimidazole synthetase</fullName>
    </alternativeName>
</protein>